<keyword id="KW-0032">Aminotransferase</keyword>
<keyword id="KW-0963">Cytoplasm</keyword>
<keyword id="KW-0315">Glutamine amidotransferase</keyword>
<keyword id="KW-1185">Reference proteome</keyword>
<keyword id="KW-0677">Repeat</keyword>
<keyword id="KW-0808">Transferase</keyword>
<evidence type="ECO:0000255" key="1">
    <source>
        <dbReference type="HAMAP-Rule" id="MF_00164"/>
    </source>
</evidence>
<reference key="1">
    <citation type="journal article" date="2005" name="Nat. Biotechnol.">
        <title>The genome sequence of the ethanologenic bacterium Zymomonas mobilis ZM4.</title>
        <authorList>
            <person name="Seo J.-S."/>
            <person name="Chong H."/>
            <person name="Park H.S."/>
            <person name="Yoon K.-O."/>
            <person name="Jung C."/>
            <person name="Kim J.J."/>
            <person name="Hong J.H."/>
            <person name="Kim H."/>
            <person name="Kim J.-H."/>
            <person name="Kil J.-I."/>
            <person name="Park C.J."/>
            <person name="Oh H.-M."/>
            <person name="Lee J.-S."/>
            <person name="Jin S.-J."/>
            <person name="Um H.-W."/>
            <person name="Lee H.-J."/>
            <person name="Oh S.-J."/>
            <person name="Kim J.Y."/>
            <person name="Kang H.L."/>
            <person name="Lee S.Y."/>
            <person name="Lee K.J."/>
            <person name="Kang H.S."/>
        </authorList>
    </citation>
    <scope>NUCLEOTIDE SEQUENCE [LARGE SCALE GENOMIC DNA]</scope>
    <source>
        <strain>ATCC 31821 / ZM4 / CP4</strain>
    </source>
</reference>
<name>GLMS_ZYMMO</name>
<protein>
    <recommendedName>
        <fullName evidence="1">Glutamine--fructose-6-phosphate aminotransferase [isomerizing]</fullName>
        <ecNumber evidence="1">2.6.1.16</ecNumber>
    </recommendedName>
    <alternativeName>
        <fullName evidence="1">D-fructose-6-phosphate amidotransferase</fullName>
    </alternativeName>
    <alternativeName>
        <fullName evidence="1">GFAT</fullName>
    </alternativeName>
    <alternativeName>
        <fullName evidence="1">Glucosamine-6-phosphate synthase</fullName>
    </alternativeName>
    <alternativeName>
        <fullName evidence="1">Hexosephosphate aminotransferase</fullName>
    </alternativeName>
    <alternativeName>
        <fullName evidence="1">L-glutamine--D-fructose-6-phosphate amidotransferase</fullName>
    </alternativeName>
</protein>
<accession>Q5NRH4</accession>
<gene>
    <name evidence="1" type="primary">glmS</name>
    <name type="ordered locus">ZMO0056</name>
</gene>
<sequence>MCGIIGIIGREDLSERLFQGLRRLEYRGYDSAGMCTIHDGKLDRRRAEGKLDNLGRVLANDPLPGKIGIAHTRWATHGAPTVANAHPHIAGDVAVVHNGIIENFKTLRDELLERGHHFESETDTEVVAHLLDEQMQAGKDPRHAVSKVLKKLRGAFALAILFKNYPDLLIGARLGSPLVVGYGDGENYLGSDALALAPLTQKISYLEEGDWVVLTREGIEVHDIEDRIVERPVVLSGASGLMVEKGNYRHFMQKEIFEQPVVVAQTLQSYLRPVEGQVALPDPDFDLSQIKRVTIVACGTSYYAGMVARYWIERFARVPVEIEAASEYRYREPVMEEGGLSLFISQSGETADTLAALRHARAGGQKIAVVVNVPTSSMAREADLLLPTHAGPEIGVASTKAFTCQLAVLAALATHIARVKGQLTQQEEQDIVRHLAEAPAALNAALAFNDTIENVATAIAPARDVLYIGRGPDYPLAMEGALKLKEISYIHAEGYAAGEMKHGPIALIDDKVPIIVLAPSGPLFEKTVSNMQEMQARGGKVILISDEKGIQEAGDNCLATLTMPKVHPLIAPIVYAIPVQLLAYHVAVIKGTDVDQPRNLAKSVTVE</sequence>
<comment type="function">
    <text evidence="1">Catalyzes the first step in hexosamine metabolism, converting fructose-6P into glucosamine-6P using glutamine as a nitrogen source.</text>
</comment>
<comment type="catalytic activity">
    <reaction evidence="1">
        <text>D-fructose 6-phosphate + L-glutamine = D-glucosamine 6-phosphate + L-glutamate</text>
        <dbReference type="Rhea" id="RHEA:13237"/>
        <dbReference type="ChEBI" id="CHEBI:29985"/>
        <dbReference type="ChEBI" id="CHEBI:58359"/>
        <dbReference type="ChEBI" id="CHEBI:58725"/>
        <dbReference type="ChEBI" id="CHEBI:61527"/>
        <dbReference type="EC" id="2.6.1.16"/>
    </reaction>
</comment>
<comment type="subunit">
    <text evidence="1">Homodimer.</text>
</comment>
<comment type="subcellular location">
    <subcellularLocation>
        <location evidence="1">Cytoplasm</location>
    </subcellularLocation>
</comment>
<organism>
    <name type="scientific">Zymomonas mobilis subsp. mobilis (strain ATCC 31821 / ZM4 / CP4)</name>
    <dbReference type="NCBI Taxonomy" id="264203"/>
    <lineage>
        <taxon>Bacteria</taxon>
        <taxon>Pseudomonadati</taxon>
        <taxon>Pseudomonadota</taxon>
        <taxon>Alphaproteobacteria</taxon>
        <taxon>Sphingomonadales</taxon>
        <taxon>Zymomonadaceae</taxon>
        <taxon>Zymomonas</taxon>
    </lineage>
</organism>
<feature type="initiator methionine" description="Removed" evidence="1">
    <location>
        <position position="1"/>
    </location>
</feature>
<feature type="chain" id="PRO_0000135420" description="Glutamine--fructose-6-phosphate aminotransferase [isomerizing]">
    <location>
        <begin position="2"/>
        <end position="607"/>
    </location>
</feature>
<feature type="domain" description="Glutamine amidotransferase type-2" evidence="1">
    <location>
        <begin position="2"/>
        <end position="217"/>
    </location>
</feature>
<feature type="domain" description="SIS 1" evidence="1">
    <location>
        <begin position="283"/>
        <end position="422"/>
    </location>
</feature>
<feature type="domain" description="SIS 2" evidence="1">
    <location>
        <begin position="455"/>
        <end position="597"/>
    </location>
</feature>
<feature type="active site" description="Nucleophile; for GATase activity" evidence="1">
    <location>
        <position position="2"/>
    </location>
</feature>
<feature type="active site" description="For Fru-6P isomerization activity" evidence="1">
    <location>
        <position position="602"/>
    </location>
</feature>
<proteinExistence type="inferred from homology"/>
<dbReference type="EC" id="2.6.1.16" evidence="1"/>
<dbReference type="EMBL" id="AE008692">
    <property type="protein sequence ID" value="AAV88680.1"/>
    <property type="molecule type" value="Genomic_DNA"/>
</dbReference>
<dbReference type="RefSeq" id="WP_011240035.1">
    <property type="nucleotide sequence ID" value="NZ_CP035711.1"/>
</dbReference>
<dbReference type="SMR" id="Q5NRH4"/>
<dbReference type="STRING" id="264203.ZMO0056"/>
<dbReference type="KEGG" id="zmo:ZMO0056"/>
<dbReference type="eggNOG" id="COG0449">
    <property type="taxonomic scope" value="Bacteria"/>
</dbReference>
<dbReference type="HOGENOM" id="CLU_012520_5_2_5"/>
<dbReference type="Proteomes" id="UP000001173">
    <property type="component" value="Chromosome"/>
</dbReference>
<dbReference type="GO" id="GO:0005829">
    <property type="term" value="C:cytosol"/>
    <property type="evidence" value="ECO:0007669"/>
    <property type="project" value="TreeGrafter"/>
</dbReference>
<dbReference type="GO" id="GO:0097367">
    <property type="term" value="F:carbohydrate derivative binding"/>
    <property type="evidence" value="ECO:0007669"/>
    <property type="project" value="InterPro"/>
</dbReference>
<dbReference type="GO" id="GO:0004360">
    <property type="term" value="F:glutamine-fructose-6-phosphate transaminase (isomerizing) activity"/>
    <property type="evidence" value="ECO:0007669"/>
    <property type="project" value="UniProtKB-UniRule"/>
</dbReference>
<dbReference type="GO" id="GO:0005975">
    <property type="term" value="P:carbohydrate metabolic process"/>
    <property type="evidence" value="ECO:0007669"/>
    <property type="project" value="UniProtKB-UniRule"/>
</dbReference>
<dbReference type="GO" id="GO:0006002">
    <property type="term" value="P:fructose 6-phosphate metabolic process"/>
    <property type="evidence" value="ECO:0007669"/>
    <property type="project" value="TreeGrafter"/>
</dbReference>
<dbReference type="GO" id="GO:0006487">
    <property type="term" value="P:protein N-linked glycosylation"/>
    <property type="evidence" value="ECO:0007669"/>
    <property type="project" value="TreeGrafter"/>
</dbReference>
<dbReference type="GO" id="GO:0006047">
    <property type="term" value="P:UDP-N-acetylglucosamine metabolic process"/>
    <property type="evidence" value="ECO:0007669"/>
    <property type="project" value="TreeGrafter"/>
</dbReference>
<dbReference type="CDD" id="cd00714">
    <property type="entry name" value="GFAT"/>
    <property type="match status" value="1"/>
</dbReference>
<dbReference type="CDD" id="cd05008">
    <property type="entry name" value="SIS_GlmS_GlmD_1"/>
    <property type="match status" value="1"/>
</dbReference>
<dbReference type="CDD" id="cd05009">
    <property type="entry name" value="SIS_GlmS_GlmD_2"/>
    <property type="match status" value="1"/>
</dbReference>
<dbReference type="FunFam" id="3.40.50.10490:FF:000001">
    <property type="entry name" value="Glutamine--fructose-6-phosphate aminotransferase [isomerizing]"/>
    <property type="match status" value="1"/>
</dbReference>
<dbReference type="FunFam" id="3.40.50.10490:FF:000002">
    <property type="entry name" value="Glutamine--fructose-6-phosphate aminotransferase [isomerizing]"/>
    <property type="match status" value="1"/>
</dbReference>
<dbReference type="FunFam" id="3.60.20.10:FF:000006">
    <property type="entry name" value="Glutamine--fructose-6-phosphate aminotransferase [isomerizing]"/>
    <property type="match status" value="1"/>
</dbReference>
<dbReference type="Gene3D" id="3.40.50.10490">
    <property type="entry name" value="Glucose-6-phosphate isomerase like protein, domain 1"/>
    <property type="match status" value="2"/>
</dbReference>
<dbReference type="Gene3D" id="3.60.20.10">
    <property type="entry name" value="Glutamine Phosphoribosylpyrophosphate, subunit 1, domain 1"/>
    <property type="match status" value="1"/>
</dbReference>
<dbReference type="HAMAP" id="MF_00164">
    <property type="entry name" value="GlmS"/>
    <property type="match status" value="1"/>
</dbReference>
<dbReference type="InterPro" id="IPR017932">
    <property type="entry name" value="GATase_2_dom"/>
</dbReference>
<dbReference type="InterPro" id="IPR005855">
    <property type="entry name" value="GFAT"/>
</dbReference>
<dbReference type="InterPro" id="IPR047084">
    <property type="entry name" value="GFAT_N"/>
</dbReference>
<dbReference type="InterPro" id="IPR035466">
    <property type="entry name" value="GlmS/AgaS_SIS"/>
</dbReference>
<dbReference type="InterPro" id="IPR035490">
    <property type="entry name" value="GlmS/FrlB_SIS"/>
</dbReference>
<dbReference type="InterPro" id="IPR029055">
    <property type="entry name" value="Ntn_hydrolases_N"/>
</dbReference>
<dbReference type="InterPro" id="IPR001347">
    <property type="entry name" value="SIS_dom"/>
</dbReference>
<dbReference type="InterPro" id="IPR046348">
    <property type="entry name" value="SIS_dom_sf"/>
</dbReference>
<dbReference type="NCBIfam" id="TIGR01135">
    <property type="entry name" value="glmS"/>
    <property type="match status" value="1"/>
</dbReference>
<dbReference type="NCBIfam" id="NF001484">
    <property type="entry name" value="PRK00331.1"/>
    <property type="match status" value="1"/>
</dbReference>
<dbReference type="PANTHER" id="PTHR10937">
    <property type="entry name" value="GLUCOSAMINE--FRUCTOSE-6-PHOSPHATE AMINOTRANSFERASE, ISOMERIZING"/>
    <property type="match status" value="1"/>
</dbReference>
<dbReference type="PANTHER" id="PTHR10937:SF0">
    <property type="entry name" value="GLUTAMINE--FRUCTOSE-6-PHOSPHATE TRANSAMINASE (ISOMERIZING)"/>
    <property type="match status" value="1"/>
</dbReference>
<dbReference type="Pfam" id="PF13522">
    <property type="entry name" value="GATase_6"/>
    <property type="match status" value="1"/>
</dbReference>
<dbReference type="Pfam" id="PF01380">
    <property type="entry name" value="SIS"/>
    <property type="match status" value="2"/>
</dbReference>
<dbReference type="SUPFAM" id="SSF56235">
    <property type="entry name" value="N-terminal nucleophile aminohydrolases (Ntn hydrolases)"/>
    <property type="match status" value="1"/>
</dbReference>
<dbReference type="SUPFAM" id="SSF53697">
    <property type="entry name" value="SIS domain"/>
    <property type="match status" value="1"/>
</dbReference>
<dbReference type="PROSITE" id="PS51278">
    <property type="entry name" value="GATASE_TYPE_2"/>
    <property type="match status" value="1"/>
</dbReference>
<dbReference type="PROSITE" id="PS51464">
    <property type="entry name" value="SIS"/>
    <property type="match status" value="2"/>
</dbReference>